<gene>
    <name evidence="1" type="primary">NFE2L1</name>
    <name evidence="1" type="synonym">NRF1</name>
    <name evidence="7" type="ORF">RCJMB04_7g14</name>
</gene>
<comment type="function">
    <molecule>Endoplasmic reticulum membrane sensor NFE2L1</molecule>
    <text evidence="1 2">Endoplasmic reticulum membrane sensor that translocates into the nucleus in response to various stresses to act as a transcription factor (By similarity). Constitutes a precursor of the transcription factor NRF1 (By similarity). Able to detect various cellular stresses, such as cholesterol excess, oxidative stress or proteasome inhibition (By similarity). In response to stress, it is released from the endoplasmic reticulum membrane following cleavage and translocates into the nucleus to form the transcription factor NRF1 (By similarity). Acts as a key sensor of cholesterol excess: in excess cholesterol conditions, the endoplasmic reticulum membrane form of the protein directly binds cholesterol via its CRAC motif, preventing cleavage and release of the transcription factor NRF1, thereby allowing expression of genes promoting cholesterol removal (By similarity). Involved in proteasome homeostasis: in response to proteasome inhibition, it is released from the endoplasmic reticulum membrane, translocates to the nucleus and activates expression of genes encoding proteasome subunits (By similarity).</text>
</comment>
<comment type="function">
    <molecule>Transcription factor NRF1</molecule>
    <text evidence="1 2">CNC-type bZIP family transcription factor that translocates to the nucleus and regulates expression of target genes in response to various stresses. Heterodimerizes with small-Maf proteins (MAFF, MAFG or MAFK) and binds DNA motifs including the antioxidant response elements (AREs), which regulate expression of genes involved in oxidative stress response. Activates or represses expression of target genes, depending on the context (By similarity). Plays a key role in cholesterol homeostasis by acting as a sensor of cholesterol excess: in low cholesterol conditions, translocates into the nucleus and represses expression of genes involved in defense against cholesterol excess (By similarity). In excess cholesterol conditions, the endoplasmic reticulum membrane form of the protein directly binds cholesterol via its CRAC motif, preventing cleavage and release of the transcription factor NRF1, thereby allowing expression of genes promoting cholesterol removal (By similarity). Critical for redox balance in response to oxidative stress: acts by binding the AREs motifs on promoters and mediating activation of oxidative stress response genes (By similarity). Involved in proteasome homeostasis: in response to proteasome inhibition, mediates the 'bounce-back' of proteasome subunits by translocating into the nucleus and activating expression of genes encoding proteasome subunits (By similarity).</text>
</comment>
<comment type="subunit">
    <molecule>Transcription factor NRF1</molecule>
    <text evidence="1">Interacts (via the bZIP domain) with small MAF protein (MAFF, MAFG or MAFK); required for binding to antioxidant response elements (AREs) on DNA.</text>
</comment>
<comment type="subcellular location">
    <molecule>Endoplasmic reticulum membrane sensor NFE2L1</molecule>
    <subcellularLocation>
        <location evidence="1">Endoplasmic reticulum membrane</location>
        <topology evidence="1">Single-pass type II membrane protein</topology>
    </subcellularLocation>
    <subcellularLocation>
        <location evidence="1">Endoplasmic reticulum membrane</location>
        <topology evidence="1">Single-pass type III membrane protein</topology>
    </subcellularLocation>
    <text evidence="1">In normal conditions, probably has a single-pass type II membrane protein topology, with the DNA-binding domain facing the endoplasmic reticulum lumen. Following cellular stress, it is rapidly and efficiently retrotranslocated to the cytosolic side of the membrane, a process dependent on p97/VCP, to have a single-pass type III membrane protein topology with the major part of the protein facing the cytosol. Retrotranslocated proteins are normally rapidly degraded by the proteasome and active species do not accumulate. However, retrotranslocated protein NFE2L1 escapes degradation and is cleaved at Leu-104, releasing the protein from the endoplasmic reticulum membrane and forming the transcription factor NRF1 that translocates into the nucleus.</text>
</comment>
<comment type="subcellular location">
    <molecule>Transcription factor NRF1</molecule>
    <subcellularLocation>
        <location evidence="1 5">Nucleus</location>
    </subcellularLocation>
    <text evidence="1">Translocates into the nucleus following cleavage of Endoplasmic reticulum membrane sensor NFE2L1.</text>
</comment>
<comment type="domain">
    <text evidence="2">The cholesterol recognition/amino acid consensus (CRAC) region directly binds cholesterol, as well as campesterol and 27-hydroxycholesterol. Has much lower affinity for epicholesterol.</text>
</comment>
<comment type="PTM">
    <molecule>Endoplasmic reticulum membrane sensor NFE2L1</molecule>
    <text evidence="1">Cleaved at Leu-104 following retrotranslocation, releasing the protein from the endoplasmic reticulum membrane and forming the transcription factor NRF1 that translocates into the nucleus.</text>
</comment>
<comment type="similarity">
    <text evidence="8">Belongs to the bZIP family. CNC subfamily.</text>
</comment>
<proteinExistence type="evidence at transcript level"/>
<evidence type="ECO:0000250" key="1">
    <source>
        <dbReference type="UniProtKB" id="Q14494"/>
    </source>
</evidence>
<evidence type="ECO:0000250" key="2">
    <source>
        <dbReference type="UniProtKB" id="Q61985"/>
    </source>
</evidence>
<evidence type="ECO:0000255" key="3"/>
<evidence type="ECO:0000255" key="4">
    <source>
        <dbReference type="PROSITE-ProRule" id="PRU00498"/>
    </source>
</evidence>
<evidence type="ECO:0000255" key="5">
    <source>
        <dbReference type="PROSITE-ProRule" id="PRU00978"/>
    </source>
</evidence>
<evidence type="ECO:0000256" key="6">
    <source>
        <dbReference type="SAM" id="MobiDB-lite"/>
    </source>
</evidence>
<evidence type="ECO:0000303" key="7">
    <source>
    </source>
</evidence>
<evidence type="ECO:0000305" key="8"/>
<organism>
    <name type="scientific">Gallus gallus</name>
    <name type="common">Chicken</name>
    <dbReference type="NCBI Taxonomy" id="9031"/>
    <lineage>
        <taxon>Eukaryota</taxon>
        <taxon>Metazoa</taxon>
        <taxon>Chordata</taxon>
        <taxon>Craniata</taxon>
        <taxon>Vertebrata</taxon>
        <taxon>Euteleostomi</taxon>
        <taxon>Archelosauria</taxon>
        <taxon>Archosauria</taxon>
        <taxon>Dinosauria</taxon>
        <taxon>Saurischia</taxon>
        <taxon>Theropoda</taxon>
        <taxon>Coelurosauria</taxon>
        <taxon>Aves</taxon>
        <taxon>Neognathae</taxon>
        <taxon>Galloanserae</taxon>
        <taxon>Galliformes</taxon>
        <taxon>Phasianidae</taxon>
        <taxon>Phasianinae</taxon>
        <taxon>Gallus</taxon>
    </lineage>
</organism>
<keyword id="KW-0010">Activator</keyword>
<keyword id="KW-0153">Cholesterol metabolism</keyword>
<keyword id="KW-0238">DNA-binding</keyword>
<keyword id="KW-0256">Endoplasmic reticulum</keyword>
<keyword id="KW-0325">Glycoprotein</keyword>
<keyword id="KW-0443">Lipid metabolism</keyword>
<keyword id="KW-0446">Lipid-binding</keyword>
<keyword id="KW-0472">Membrane</keyword>
<keyword id="KW-0539">Nucleus</keyword>
<keyword id="KW-1185">Reference proteome</keyword>
<keyword id="KW-0678">Repressor</keyword>
<keyword id="KW-0735">Signal-anchor</keyword>
<keyword id="KW-0753">Steroid metabolism</keyword>
<keyword id="KW-1207">Sterol metabolism</keyword>
<keyword id="KW-0804">Transcription</keyword>
<keyword id="KW-0805">Transcription regulation</keyword>
<keyword id="KW-0812">Transmembrane</keyword>
<keyword id="KW-1133">Transmembrane helix</keyword>
<dbReference type="EMBL" id="AJ719867">
    <property type="protein sequence ID" value="CAG31526.1"/>
    <property type="molecule type" value="mRNA"/>
</dbReference>
<dbReference type="RefSeq" id="NP_001025927.1">
    <property type="nucleotide sequence ID" value="NM_001030756.1"/>
</dbReference>
<dbReference type="SMR" id="Q5ZL67"/>
<dbReference type="FunCoup" id="Q5ZL67">
    <property type="interactions" value="788"/>
</dbReference>
<dbReference type="STRING" id="9031.ENSGALP00000035379"/>
<dbReference type="GlyCosmos" id="Q5ZL67">
    <property type="glycosylation" value="9 sites, No reported glycans"/>
</dbReference>
<dbReference type="GlyGen" id="Q5ZL67">
    <property type="glycosylation" value="9 sites"/>
</dbReference>
<dbReference type="PaxDb" id="9031-ENSGALP00000035379"/>
<dbReference type="Ensembl" id="ENSGALT00010052401.1">
    <property type="protein sequence ID" value="ENSGALP00010031315.1"/>
    <property type="gene ID" value="ENSGALG00010021583.1"/>
</dbReference>
<dbReference type="GeneID" id="417987"/>
<dbReference type="KEGG" id="gga:417987"/>
<dbReference type="CTD" id="4779"/>
<dbReference type="VEuPathDB" id="HostDB:geneid_417987"/>
<dbReference type="eggNOG" id="KOG3863">
    <property type="taxonomic scope" value="Eukaryota"/>
</dbReference>
<dbReference type="GeneTree" id="ENSGT00950000182892"/>
<dbReference type="HOGENOM" id="CLU_024173_1_0_1"/>
<dbReference type="InParanoid" id="Q5ZL67"/>
<dbReference type="OMA" id="PEGNQEH"/>
<dbReference type="OrthoDB" id="7458135at2759"/>
<dbReference type="PhylomeDB" id="Q5ZL67"/>
<dbReference type="PRO" id="PR:Q5ZL67"/>
<dbReference type="Proteomes" id="UP000000539">
    <property type="component" value="Chromosome 27"/>
</dbReference>
<dbReference type="Bgee" id="ENSGALG00000011937">
    <property type="expression patterns" value="Expressed in skeletal muscle tissue and 13 other cell types or tissues"/>
</dbReference>
<dbReference type="GO" id="GO:0005789">
    <property type="term" value="C:endoplasmic reticulum membrane"/>
    <property type="evidence" value="ECO:0007669"/>
    <property type="project" value="UniProtKB-SubCell"/>
</dbReference>
<dbReference type="GO" id="GO:0005634">
    <property type="term" value="C:nucleus"/>
    <property type="evidence" value="ECO:0000318"/>
    <property type="project" value="GO_Central"/>
</dbReference>
<dbReference type="GO" id="GO:0000981">
    <property type="term" value="F:DNA-binding transcription factor activity, RNA polymerase II-specific"/>
    <property type="evidence" value="ECO:0000318"/>
    <property type="project" value="GO_Central"/>
</dbReference>
<dbReference type="GO" id="GO:0008289">
    <property type="term" value="F:lipid binding"/>
    <property type="evidence" value="ECO:0007669"/>
    <property type="project" value="UniProtKB-KW"/>
</dbReference>
<dbReference type="GO" id="GO:0000978">
    <property type="term" value="F:RNA polymerase II cis-regulatory region sequence-specific DNA binding"/>
    <property type="evidence" value="ECO:0000318"/>
    <property type="project" value="GO_Central"/>
</dbReference>
<dbReference type="GO" id="GO:0008203">
    <property type="term" value="P:cholesterol metabolic process"/>
    <property type="evidence" value="ECO:0007669"/>
    <property type="project" value="UniProtKB-KW"/>
</dbReference>
<dbReference type="GO" id="GO:0006357">
    <property type="term" value="P:regulation of transcription by RNA polymerase II"/>
    <property type="evidence" value="ECO:0000318"/>
    <property type="project" value="GO_Central"/>
</dbReference>
<dbReference type="CDD" id="cd14720">
    <property type="entry name" value="bZIP_NFE2-like"/>
    <property type="match status" value="1"/>
</dbReference>
<dbReference type="FunFam" id="1.10.880.10:FF:000001">
    <property type="entry name" value="Nuclear factor erythroid 2-related factor 2"/>
    <property type="match status" value="1"/>
</dbReference>
<dbReference type="Gene3D" id="1.10.880.10">
    <property type="entry name" value="Transcription factor, Skn-1-like, DNA-binding domain"/>
    <property type="match status" value="1"/>
</dbReference>
<dbReference type="InterPro" id="IPR004827">
    <property type="entry name" value="bZIP"/>
</dbReference>
<dbReference type="InterPro" id="IPR004826">
    <property type="entry name" value="bZIP_Maf"/>
</dbReference>
<dbReference type="InterPro" id="IPR047167">
    <property type="entry name" value="NFE2-like"/>
</dbReference>
<dbReference type="InterPro" id="IPR008917">
    <property type="entry name" value="TF_DNA-bd_sf"/>
</dbReference>
<dbReference type="PANTHER" id="PTHR24411:SF31">
    <property type="entry name" value="ENDOPLASMIC RETICULUM MEMBRANE SENSOR NFE2L1"/>
    <property type="match status" value="1"/>
</dbReference>
<dbReference type="PANTHER" id="PTHR24411">
    <property type="entry name" value="NUCLEAR FACTOR ERYTHROID 2-RELATED FACTOR"/>
    <property type="match status" value="1"/>
</dbReference>
<dbReference type="Pfam" id="PF03131">
    <property type="entry name" value="bZIP_Maf"/>
    <property type="match status" value="1"/>
</dbReference>
<dbReference type="SMART" id="SM00338">
    <property type="entry name" value="BRLZ"/>
    <property type="match status" value="1"/>
</dbReference>
<dbReference type="SUPFAM" id="SSF47454">
    <property type="entry name" value="A DNA-binding domain in eukaryotic transcription factors"/>
    <property type="match status" value="1"/>
</dbReference>
<dbReference type="PROSITE" id="PS50217">
    <property type="entry name" value="BZIP"/>
    <property type="match status" value="1"/>
</dbReference>
<dbReference type="PROSITE" id="PS00036">
    <property type="entry name" value="BZIP_BASIC"/>
    <property type="match status" value="1"/>
</dbReference>
<name>NF2L1_CHICK</name>
<feature type="chain" id="PRO_0000341948" description="Endoplasmic reticulum membrane sensor NFE2L1">
    <location>
        <begin position="1"/>
        <end position="772"/>
    </location>
</feature>
<feature type="chain" id="PRO_0000443106" description="Transcription factor NRF1" evidence="1">
    <location>
        <begin position="104"/>
        <end position="772"/>
    </location>
</feature>
<feature type="transmembrane region" description="Helical; Signal-anchor for type II membrane protein" evidence="3">
    <location>
        <begin position="7"/>
        <end position="24"/>
    </location>
</feature>
<feature type="domain" description="bZIP" evidence="5">
    <location>
        <begin position="654"/>
        <end position="717"/>
    </location>
</feature>
<feature type="region of interest" description="Cholesterol recognition/amino acid consensus (CRAC) region" evidence="2">
    <location>
        <begin position="191"/>
        <end position="199"/>
    </location>
</feature>
<feature type="region of interest" description="Disordered" evidence="6">
    <location>
        <begin position="198"/>
        <end position="223"/>
    </location>
</feature>
<feature type="region of interest" description="Disordered" evidence="6">
    <location>
        <begin position="472"/>
        <end position="531"/>
    </location>
</feature>
<feature type="region of interest" description="Disordered" evidence="6">
    <location>
        <begin position="581"/>
        <end position="613"/>
    </location>
</feature>
<feature type="region of interest" description="Basic motif" evidence="5">
    <location>
        <begin position="656"/>
        <end position="675"/>
    </location>
</feature>
<feature type="region of interest" description="Leucine-zipper" evidence="5">
    <location>
        <begin position="682"/>
        <end position="696"/>
    </location>
</feature>
<feature type="short sequence motif" description="Nuclear localization signal" evidence="3">
    <location>
        <begin position="761"/>
        <end position="768"/>
    </location>
</feature>
<feature type="compositionally biased region" description="Basic and acidic residues" evidence="6">
    <location>
        <begin position="198"/>
        <end position="216"/>
    </location>
</feature>
<feature type="compositionally biased region" description="Low complexity" evidence="6">
    <location>
        <begin position="478"/>
        <end position="519"/>
    </location>
</feature>
<feature type="compositionally biased region" description="Basic and acidic residues" evidence="6">
    <location>
        <begin position="598"/>
        <end position="613"/>
    </location>
</feature>
<feature type="site" description="Cleavage" evidence="1">
    <location>
        <begin position="103"/>
        <end position="104"/>
    </location>
</feature>
<feature type="glycosylation site" description="N-linked (GlcNAc...) asparagine" evidence="4">
    <location>
        <position position="332"/>
    </location>
</feature>
<feature type="glycosylation site" description="N-linked (GlcNAc...) asparagine" evidence="4">
    <location>
        <position position="340"/>
    </location>
</feature>
<feature type="glycosylation site" description="N-linked (GlcNAc...) asparagine" evidence="4">
    <location>
        <position position="362"/>
    </location>
</feature>
<feature type="glycosylation site" description="N-linked (GlcNAc...) asparagine" evidence="4">
    <location>
        <position position="402"/>
    </location>
</feature>
<feature type="glycosylation site" description="N-linked (GlcNAc...) asparagine" evidence="4">
    <location>
        <position position="407"/>
    </location>
</feature>
<feature type="glycosylation site" description="N-linked (GlcNAc...) asparagine" evidence="4">
    <location>
        <position position="414"/>
    </location>
</feature>
<feature type="glycosylation site" description="N-linked (GlcNAc...) asparagine" evidence="4">
    <location>
        <position position="425"/>
    </location>
</feature>
<feature type="glycosylation site" description="N-linked (GlcNAc...) asparagine" evidence="4">
    <location>
        <position position="429"/>
    </location>
</feature>
<feature type="glycosylation site" description="N-linked (GlcNAc...) asparagine" evidence="4">
    <location>
        <position position="574"/>
    </location>
</feature>
<sequence>MLSLKKYFTEGLIQFTILLSLIGVRVDVDTYLNSQLPPLREIILGQSSAYTQTQFHNLRNTLDGYGIHPKSVDLDYYFTARRLLNQVRALDRFQVPTTEVSAWLVHRDPDGSVSGTQPSAGIALENSGGLQDGTGPDGAVRESGAEQGFGEELEDLGAVAAPVNGDLTKEDIDLIDILWRQDIDLGAGREIFDYSHRQKESEVDKELSDGRERGDGWRSAGGQVTNRNLLVDGETGESFPAQVPGVEDQTALSLEECLRLLEATFPFGENSEFPAADVSTLSEAVPSESRPAGIQSSLLSPLLPETESPFDLEQQWQDLMSIMEMQAMEVNNTTAETLYNGTSGDLLTSNYNLAPNTPINQNVSLHQASLGSCSQDFSLFSSEIESPSMGGSSALLQLAPDNSTGLNTTFSSTNFSGIFFPPQLNSTVNETAGPELPDPLGGLLDEAMLDEISLMDLAIEEGFNPVQASQLEEEFDSDSGLSLDSGHSPASLSSSEASSSSSSSSSSSSSSSSSSSSFSEEGAVGYSSDSENVDFEEAEGAVGYQPEYSKFCRMSYQDPSQLHYLPYLEHVGHNHTYNMAPGTLDPEEPKLPSVGKKSSKEKPSEFLDKQMSRDEHRARAMKIPFTNDKIINLPVEEFNELLSKYQLSEAQLSLIRDIRRRGKNKMAAQNCRKRKLDTILNLERDVEDLQRDKSKLLREKVEFLKSIRQMKQKVQNLYQEVFGRLRDENGQPYSPNQYALQYASDGSVILIPRTLADQQARRQERKQKDRRK</sequence>
<protein>
    <recommendedName>
        <fullName evidence="8">Endoplasmic reticulum membrane sensor NFE2L1</fullName>
    </recommendedName>
    <alternativeName>
        <fullName evidence="1">Nuclear factor erythroid 2-related factor 1</fullName>
        <shortName evidence="1">NF-E2-related factor 1</shortName>
        <shortName evidence="1">NFE2-related factor 1</shortName>
    </alternativeName>
    <alternativeName>
        <fullName evidence="1">Nuclear factor, erythroid derived 2, like 1</fullName>
    </alternativeName>
    <component>
        <recommendedName>
            <fullName evidence="1">Transcription factor NRF1</fullName>
        </recommendedName>
    </component>
</protein>
<reference key="1">
    <citation type="journal article" date="2005" name="Genome Biol.">
        <title>Full-length cDNAs from chicken bursal lymphocytes to facilitate gene function analysis.</title>
        <authorList>
            <person name="Caldwell R.B."/>
            <person name="Kierzek A.M."/>
            <person name="Arakawa H."/>
            <person name="Bezzubov Y."/>
            <person name="Zaim J."/>
            <person name="Fiedler P."/>
            <person name="Kutter S."/>
            <person name="Blagodatski A."/>
            <person name="Kostovska D."/>
            <person name="Koter M."/>
            <person name="Plachy J."/>
            <person name="Carninci P."/>
            <person name="Hayashizaki Y."/>
            <person name="Buerstedde J.-M."/>
        </authorList>
    </citation>
    <scope>NUCLEOTIDE SEQUENCE [LARGE SCALE MRNA]</scope>
    <source>
        <strain>CB</strain>
        <tissue>Bursa of Fabricius</tissue>
    </source>
</reference>
<accession>Q5ZL67</accession>